<organism>
    <name type="scientific">Pyricularia oryzae (strain 70-15 / ATCC MYA-4617 / FGSC 8958)</name>
    <name type="common">Rice blast fungus</name>
    <name type="synonym">Magnaporthe oryzae</name>
    <dbReference type="NCBI Taxonomy" id="242507"/>
    <lineage>
        <taxon>Eukaryota</taxon>
        <taxon>Fungi</taxon>
        <taxon>Dikarya</taxon>
        <taxon>Ascomycota</taxon>
        <taxon>Pezizomycotina</taxon>
        <taxon>Sordariomycetes</taxon>
        <taxon>Sordariomycetidae</taxon>
        <taxon>Magnaporthales</taxon>
        <taxon>Pyriculariaceae</taxon>
        <taxon>Pyricularia</taxon>
    </lineage>
</organism>
<keyword id="KW-0963">Cytoplasm</keyword>
<keyword id="KW-0325">Glycoprotein</keyword>
<keyword id="KW-1185">Reference proteome</keyword>
<keyword id="KW-0732">Signal</keyword>
<keyword id="KW-0843">Virulence</keyword>
<reference key="1">
    <citation type="journal article" date="2005" name="Nature">
        <title>The genome sequence of the rice blast fungus Magnaporthe grisea.</title>
        <authorList>
            <person name="Dean R.A."/>
            <person name="Talbot N.J."/>
            <person name="Ebbole D.J."/>
            <person name="Farman M.L."/>
            <person name="Mitchell T.K."/>
            <person name="Orbach M.J."/>
            <person name="Thon M.R."/>
            <person name="Kulkarni R."/>
            <person name="Xu J.-R."/>
            <person name="Pan H."/>
            <person name="Read N.D."/>
            <person name="Lee Y.-H."/>
            <person name="Carbone I."/>
            <person name="Brown D."/>
            <person name="Oh Y.Y."/>
            <person name="Donofrio N."/>
            <person name="Jeong J.S."/>
            <person name="Soanes D.M."/>
            <person name="Djonovic S."/>
            <person name="Kolomiets E."/>
            <person name="Rehmeyer C."/>
            <person name="Li W."/>
            <person name="Harding M."/>
            <person name="Kim S."/>
            <person name="Lebrun M.-H."/>
            <person name="Bohnert H."/>
            <person name="Coughlan S."/>
            <person name="Butler J."/>
            <person name="Calvo S.E."/>
            <person name="Ma L.-J."/>
            <person name="Nicol R."/>
            <person name="Purcell S."/>
            <person name="Nusbaum C."/>
            <person name="Galagan J.E."/>
            <person name="Birren B.W."/>
        </authorList>
    </citation>
    <scope>NUCLEOTIDE SEQUENCE [LARGE SCALE GENOMIC DNA]</scope>
    <source>
        <strain>70-15 / ATCC MYA-4617 / FGSC 8958</strain>
    </source>
</reference>
<reference key="2">
    <citation type="journal article" date="2002" name="Plant Cell">
        <title>Two novel fungal virulence genes specifically expressed in appressoria of the rice blast fungus.</title>
        <authorList>
            <person name="Xue C."/>
            <person name="Park G."/>
            <person name="Choi W."/>
            <person name="Zheng L."/>
            <person name="Dean R.A."/>
            <person name="Xu J.R."/>
        </authorList>
    </citation>
    <scope>INDUCTION</scope>
    <scope>FUNCTION</scope>
    <scope>DISRUPTION PHENOTYPE</scope>
    <scope>SUBCELLULAR LOCATION</scope>
</reference>
<reference key="3">
    <citation type="journal article" date="2013" name="Gene Expr. Patterns">
        <title>Complexity of roles and regulation of the PMK1-MAPK pathway in mycelium development, conidiation and appressorium formation in Magnaporthe oryzae.</title>
        <authorList>
            <person name="Jin Q."/>
            <person name="Li C."/>
            <person name="Li Y."/>
            <person name="Shang J."/>
            <person name="Li D."/>
            <person name="Chen B."/>
            <person name="Dong H."/>
        </authorList>
    </citation>
    <scope>FUNCTION</scope>
    <scope>DISRUPTION PHENOTYPE</scope>
</reference>
<feature type="signal peptide" evidence="2">
    <location>
        <begin position="1"/>
        <end position="19"/>
    </location>
</feature>
<feature type="chain" id="PRO_5003466884" description="Appressoria-specific virulence factor GAS2" evidence="2">
    <location>
        <begin position="20"/>
        <end position="290"/>
    </location>
</feature>
<feature type="region of interest" description="Disordered" evidence="4">
    <location>
        <begin position="121"/>
        <end position="140"/>
    </location>
</feature>
<feature type="glycosylation site" description="N-linked (GlcNAc...) asparagine" evidence="3">
    <location>
        <position position="99"/>
    </location>
</feature>
<gene>
    <name evidence="7" type="primary">GAS2</name>
    <name evidence="1" type="synonym">MAS1</name>
    <name type="ORF">MGG_04202</name>
</gene>
<protein>
    <recommendedName>
        <fullName evidence="7">Appressoria-specific virulence factor GAS2</fullName>
    </recommendedName>
</protein>
<accession>G4NF50</accession>
<dbReference type="EMBL" id="CM001236">
    <property type="protein sequence ID" value="EHA47253.1"/>
    <property type="molecule type" value="Genomic_DNA"/>
</dbReference>
<dbReference type="RefSeq" id="XP_003719620.1">
    <property type="nucleotide sequence ID" value="XM_003719572.1"/>
</dbReference>
<dbReference type="GlyCosmos" id="G4NF50">
    <property type="glycosylation" value="1 site, No reported glycans"/>
</dbReference>
<dbReference type="EnsemblFungi" id="MGG_04202T0">
    <property type="protein sequence ID" value="MGG_04202T0"/>
    <property type="gene ID" value="MGG_04202"/>
</dbReference>
<dbReference type="GeneID" id="2677126"/>
<dbReference type="KEGG" id="mgr:MGG_04202"/>
<dbReference type="VEuPathDB" id="FungiDB:MGG_04202"/>
<dbReference type="eggNOG" id="ENOG502SM0P">
    <property type="taxonomic scope" value="Eukaryota"/>
</dbReference>
<dbReference type="HOGENOM" id="CLU_047729_4_0_1"/>
<dbReference type="InParanoid" id="G4NF50"/>
<dbReference type="OMA" id="TMTFHQV"/>
<dbReference type="OrthoDB" id="5310497at2759"/>
<dbReference type="Proteomes" id="UP000009058">
    <property type="component" value="Chromosome 6"/>
</dbReference>
<dbReference type="GO" id="GO:0005737">
    <property type="term" value="C:cytoplasm"/>
    <property type="evidence" value="ECO:0007669"/>
    <property type="project" value="UniProtKB-SubCell"/>
</dbReference>
<dbReference type="InterPro" id="IPR021476">
    <property type="entry name" value="Egh16-like"/>
</dbReference>
<dbReference type="PANTHER" id="PTHR34618:SF1">
    <property type="entry name" value="SECRETED PROTEIN"/>
    <property type="match status" value="1"/>
</dbReference>
<dbReference type="PANTHER" id="PTHR34618">
    <property type="entry name" value="SURFACE PROTEIN MAS1, PUTATIVE-RELATED"/>
    <property type="match status" value="1"/>
</dbReference>
<dbReference type="Pfam" id="PF11327">
    <property type="entry name" value="Egh16-like"/>
    <property type="match status" value="1"/>
</dbReference>
<name>GAS2_PYRO7</name>
<sequence length="290" mass="29414">MKYTSAILISAFAATNVFAHGVVTEVQGANGVTLPGLTAIDGTPRDCPNPGCGSEADTAIIRDRELGTSRASALGRTQGGGPVDAAKMIELFMDGASVNKSDVVAARERHAANLARRATLLPRAGGGTSTPKGTEETGVKAATGIAATKGLPTTNDDGTINIVFHQVNQDGAGPLTADIDSTSGGQDVSAFQKAKITTNVPGLGIAGLSAAQTMDFPVAVQMPAGATCSGSVGGANNVCIARLRNAAVTGPFGGSVAFTQSPAARKRAIEYNLAKRRFARSLATDEEDDE</sequence>
<proteinExistence type="evidence at transcript level"/>
<comment type="function">
    <text evidence="5 6">Appressoria-specific virulence factor required for appressorial penetration in host and lesion development.</text>
</comment>
<comment type="subcellular location">
    <subcellularLocation>
        <location evidence="5">Cytoplasm</location>
    </subcellularLocation>
    <text evidence="5">Exclusively located in the cytoplasm of appressoria cells.</text>
</comment>
<comment type="induction">
    <text evidence="5">Expressed specifically during appressorium formation.</text>
</comment>
<comment type="disruption phenotype">
    <text evidence="5 6">Does not affect vegetative growth, conidiation, or appressoria formation, but redices in appressorial penetration and lesion development.</text>
</comment>
<evidence type="ECO:0000250" key="1">
    <source>
        <dbReference type="UniProtKB" id="Q9P470"/>
    </source>
</evidence>
<evidence type="ECO:0000255" key="2"/>
<evidence type="ECO:0000255" key="3">
    <source>
        <dbReference type="PROSITE-ProRule" id="PRU00498"/>
    </source>
</evidence>
<evidence type="ECO:0000256" key="4">
    <source>
        <dbReference type="SAM" id="MobiDB-lite"/>
    </source>
</evidence>
<evidence type="ECO:0000269" key="5">
    <source>
    </source>
</evidence>
<evidence type="ECO:0000269" key="6">
    <source>
    </source>
</evidence>
<evidence type="ECO:0000303" key="7">
    <source>
    </source>
</evidence>